<gene>
    <name evidence="1" type="primary">gltX2</name>
    <name type="ordered locus">SYNAS_19610</name>
    <name type="ORF">SYN_01399</name>
</gene>
<name>SYE2_SYNAS</name>
<feature type="chain" id="PRO_0000237414" description="Glutamate--tRNA ligase 2">
    <location>
        <begin position="1"/>
        <end position="486"/>
    </location>
</feature>
<feature type="short sequence motif" description="'HIGH' region" evidence="1">
    <location>
        <begin position="12"/>
        <end position="22"/>
    </location>
</feature>
<feature type="short sequence motif" description="'KMSKS' region" evidence="1">
    <location>
        <begin position="252"/>
        <end position="256"/>
    </location>
</feature>
<feature type="binding site" evidence="1">
    <location>
        <position position="255"/>
    </location>
    <ligand>
        <name>ATP</name>
        <dbReference type="ChEBI" id="CHEBI:30616"/>
    </ligand>
</feature>
<comment type="function">
    <text evidence="1">Catalyzes the attachment of glutamate to tRNA(Glu) in a two-step reaction: glutamate is first activated by ATP to form Glu-AMP and then transferred to the acceptor end of tRNA(Glu).</text>
</comment>
<comment type="catalytic activity">
    <reaction evidence="1">
        <text>tRNA(Glu) + L-glutamate + ATP = L-glutamyl-tRNA(Glu) + AMP + diphosphate</text>
        <dbReference type="Rhea" id="RHEA:23540"/>
        <dbReference type="Rhea" id="RHEA-COMP:9663"/>
        <dbReference type="Rhea" id="RHEA-COMP:9680"/>
        <dbReference type="ChEBI" id="CHEBI:29985"/>
        <dbReference type="ChEBI" id="CHEBI:30616"/>
        <dbReference type="ChEBI" id="CHEBI:33019"/>
        <dbReference type="ChEBI" id="CHEBI:78442"/>
        <dbReference type="ChEBI" id="CHEBI:78520"/>
        <dbReference type="ChEBI" id="CHEBI:456215"/>
        <dbReference type="EC" id="6.1.1.17"/>
    </reaction>
</comment>
<comment type="subunit">
    <text evidence="1">Monomer.</text>
</comment>
<comment type="subcellular location">
    <subcellularLocation>
        <location evidence="1">Cytoplasm</location>
    </subcellularLocation>
</comment>
<comment type="similarity">
    <text evidence="1">Belongs to the class-I aminoacyl-tRNA synthetase family. Glutamate--tRNA ligase type 1 subfamily.</text>
</comment>
<keyword id="KW-0030">Aminoacyl-tRNA synthetase</keyword>
<keyword id="KW-0067">ATP-binding</keyword>
<keyword id="KW-0963">Cytoplasm</keyword>
<keyword id="KW-0436">Ligase</keyword>
<keyword id="KW-0547">Nucleotide-binding</keyword>
<keyword id="KW-0648">Protein biosynthesis</keyword>
<keyword id="KW-1185">Reference proteome</keyword>
<reference key="1">
    <citation type="journal article" date="2007" name="Proc. Natl. Acad. Sci. U.S.A.">
        <title>The genome of Syntrophus aciditrophicus: life at the thermodynamic limit of microbial growth.</title>
        <authorList>
            <person name="McInerney M.J."/>
            <person name="Rohlin L."/>
            <person name="Mouttaki H."/>
            <person name="Kim U."/>
            <person name="Krupp R.S."/>
            <person name="Rios-Hernandez L."/>
            <person name="Sieber J."/>
            <person name="Struchtemeyer C.G."/>
            <person name="Bhattacharyya A."/>
            <person name="Campbell J.W."/>
            <person name="Gunsalus R.P."/>
        </authorList>
    </citation>
    <scope>NUCLEOTIDE SEQUENCE [LARGE SCALE GENOMIC DNA]</scope>
    <source>
        <strain>SB</strain>
    </source>
</reference>
<evidence type="ECO:0000255" key="1">
    <source>
        <dbReference type="HAMAP-Rule" id="MF_00022"/>
    </source>
</evidence>
<proteinExistence type="inferred from homology"/>
<accession>Q2LUT2</accession>
<sequence>MNSTKPRVRFAPSPTGELHIGNARTAFFNWLYARHYGGKLILRIEDTDRQRSTRAFEARLIDDLKWLSLDWDEGPDGKGEVGPYRQSERLDLYESFLKNLQKDGRVYPCYCTEDELELERTSLLSRKMAPRYMGKCRNLTEADRRRLEAQGRRPTWRFRVSQGPVLFQDLIRGTMKFQGEAVGDFIIVRSNGTPAYNFAVVIDDHFMEISTVIRGEDHLSNTAIQLMLYEALGFEPPEFAHHSLILGKDRTKLSKRHGSVSVREFREKGILPEALLNYLALLGSSIGEGREVCSLEEIITAFSLDRAGKSGAVFDEDKLLWMNSLYIHEEPAIKLIERLRPFIEKAGYDVNKWETPWLDRMVEAVKPNLTTLADIGSYVKMIVEEPVRIDEDAAAVLRETETQMVLRTLLQLIEEGKFSHEDFYSQVMTALRKVTGARGKRLFMPVRAALTGTTRGPELDKIFVLLGEQSVKERLKKALNMQGNFS</sequence>
<dbReference type="EC" id="6.1.1.17" evidence="1"/>
<dbReference type="EMBL" id="CP000252">
    <property type="protein sequence ID" value="ABC77840.1"/>
    <property type="molecule type" value="Genomic_DNA"/>
</dbReference>
<dbReference type="RefSeq" id="WP_011417861.1">
    <property type="nucleotide sequence ID" value="NC_007759.1"/>
</dbReference>
<dbReference type="SMR" id="Q2LUT2"/>
<dbReference type="STRING" id="56780.SYN_01399"/>
<dbReference type="KEGG" id="sat:SYN_01399"/>
<dbReference type="eggNOG" id="COG0008">
    <property type="taxonomic scope" value="Bacteria"/>
</dbReference>
<dbReference type="HOGENOM" id="CLU_015768_6_3_7"/>
<dbReference type="InParanoid" id="Q2LUT2"/>
<dbReference type="OrthoDB" id="9807503at2"/>
<dbReference type="Proteomes" id="UP000001933">
    <property type="component" value="Chromosome"/>
</dbReference>
<dbReference type="GO" id="GO:0005829">
    <property type="term" value="C:cytosol"/>
    <property type="evidence" value="ECO:0007669"/>
    <property type="project" value="TreeGrafter"/>
</dbReference>
<dbReference type="GO" id="GO:0005524">
    <property type="term" value="F:ATP binding"/>
    <property type="evidence" value="ECO:0007669"/>
    <property type="project" value="UniProtKB-UniRule"/>
</dbReference>
<dbReference type="GO" id="GO:0004818">
    <property type="term" value="F:glutamate-tRNA ligase activity"/>
    <property type="evidence" value="ECO:0007669"/>
    <property type="project" value="UniProtKB-UniRule"/>
</dbReference>
<dbReference type="GO" id="GO:0000049">
    <property type="term" value="F:tRNA binding"/>
    <property type="evidence" value="ECO:0007669"/>
    <property type="project" value="InterPro"/>
</dbReference>
<dbReference type="GO" id="GO:0008270">
    <property type="term" value="F:zinc ion binding"/>
    <property type="evidence" value="ECO:0007669"/>
    <property type="project" value="InterPro"/>
</dbReference>
<dbReference type="GO" id="GO:0006424">
    <property type="term" value="P:glutamyl-tRNA aminoacylation"/>
    <property type="evidence" value="ECO:0007669"/>
    <property type="project" value="UniProtKB-UniRule"/>
</dbReference>
<dbReference type="CDD" id="cd00808">
    <property type="entry name" value="GluRS_core"/>
    <property type="match status" value="1"/>
</dbReference>
<dbReference type="FunFam" id="3.40.50.620:FF:000045">
    <property type="entry name" value="Glutamate--tRNA ligase, mitochondrial"/>
    <property type="match status" value="1"/>
</dbReference>
<dbReference type="Gene3D" id="1.10.10.350">
    <property type="match status" value="1"/>
</dbReference>
<dbReference type="Gene3D" id="1.10.8.70">
    <property type="entry name" value="Glutamate-tRNA synthetase, class I, anticodon-binding domain 1"/>
    <property type="match status" value="1"/>
</dbReference>
<dbReference type="Gene3D" id="3.40.50.620">
    <property type="entry name" value="HUPs"/>
    <property type="match status" value="1"/>
</dbReference>
<dbReference type="HAMAP" id="MF_00022">
    <property type="entry name" value="Glu_tRNA_synth_type1"/>
    <property type="match status" value="1"/>
</dbReference>
<dbReference type="InterPro" id="IPR045462">
    <property type="entry name" value="aa-tRNA-synth_I_cd-bd"/>
</dbReference>
<dbReference type="InterPro" id="IPR020751">
    <property type="entry name" value="aa-tRNA-synth_I_codon-bd_sub2"/>
</dbReference>
<dbReference type="InterPro" id="IPR001412">
    <property type="entry name" value="aa-tRNA-synth_I_CS"/>
</dbReference>
<dbReference type="InterPro" id="IPR008925">
    <property type="entry name" value="aa_tRNA-synth_I_cd-bd_sf"/>
</dbReference>
<dbReference type="InterPro" id="IPR004527">
    <property type="entry name" value="Glu-tRNA-ligase_bac/mito"/>
</dbReference>
<dbReference type="InterPro" id="IPR020752">
    <property type="entry name" value="Glu-tRNA-synth_I_codon-bd_sub1"/>
</dbReference>
<dbReference type="InterPro" id="IPR000924">
    <property type="entry name" value="Glu/Gln-tRNA-synth"/>
</dbReference>
<dbReference type="InterPro" id="IPR020058">
    <property type="entry name" value="Glu/Gln-tRNA-synth_Ib_cat-dom"/>
</dbReference>
<dbReference type="InterPro" id="IPR049940">
    <property type="entry name" value="GluQ/Sye"/>
</dbReference>
<dbReference type="InterPro" id="IPR033910">
    <property type="entry name" value="GluRS_core"/>
</dbReference>
<dbReference type="InterPro" id="IPR014729">
    <property type="entry name" value="Rossmann-like_a/b/a_fold"/>
</dbReference>
<dbReference type="NCBIfam" id="TIGR00464">
    <property type="entry name" value="gltX_bact"/>
    <property type="match status" value="1"/>
</dbReference>
<dbReference type="NCBIfam" id="NF004315">
    <property type="entry name" value="PRK05710.1-4"/>
    <property type="match status" value="1"/>
</dbReference>
<dbReference type="PANTHER" id="PTHR43311">
    <property type="entry name" value="GLUTAMATE--TRNA LIGASE"/>
    <property type="match status" value="1"/>
</dbReference>
<dbReference type="PANTHER" id="PTHR43311:SF2">
    <property type="entry name" value="GLUTAMATE--TRNA LIGASE, MITOCHONDRIAL-RELATED"/>
    <property type="match status" value="1"/>
</dbReference>
<dbReference type="Pfam" id="PF19269">
    <property type="entry name" value="Anticodon_2"/>
    <property type="match status" value="1"/>
</dbReference>
<dbReference type="Pfam" id="PF00749">
    <property type="entry name" value="tRNA-synt_1c"/>
    <property type="match status" value="1"/>
</dbReference>
<dbReference type="PRINTS" id="PR00987">
    <property type="entry name" value="TRNASYNTHGLU"/>
</dbReference>
<dbReference type="SUPFAM" id="SSF48163">
    <property type="entry name" value="An anticodon-binding domain of class I aminoacyl-tRNA synthetases"/>
    <property type="match status" value="1"/>
</dbReference>
<dbReference type="SUPFAM" id="SSF52374">
    <property type="entry name" value="Nucleotidylyl transferase"/>
    <property type="match status" value="1"/>
</dbReference>
<dbReference type="PROSITE" id="PS00178">
    <property type="entry name" value="AA_TRNA_LIGASE_I"/>
    <property type="match status" value="1"/>
</dbReference>
<protein>
    <recommendedName>
        <fullName evidence="1">Glutamate--tRNA ligase 2</fullName>
        <ecNumber evidence="1">6.1.1.17</ecNumber>
    </recommendedName>
    <alternativeName>
        <fullName evidence="1">Glutamyl-tRNA synthetase 2</fullName>
        <shortName evidence="1">GluRS 2</shortName>
    </alternativeName>
</protein>
<organism>
    <name type="scientific">Syntrophus aciditrophicus (strain SB)</name>
    <dbReference type="NCBI Taxonomy" id="56780"/>
    <lineage>
        <taxon>Bacteria</taxon>
        <taxon>Pseudomonadati</taxon>
        <taxon>Thermodesulfobacteriota</taxon>
        <taxon>Syntrophia</taxon>
        <taxon>Syntrophales</taxon>
        <taxon>Syntrophaceae</taxon>
        <taxon>Syntrophus</taxon>
    </lineage>
</organism>